<keyword id="KW-0028">Amino-acid biosynthesis</keyword>
<keyword id="KW-0100">Branched-chain amino acid biosynthesis</keyword>
<keyword id="KW-0460">Magnesium</keyword>
<keyword id="KW-0479">Metal-binding</keyword>
<keyword id="KW-0521">NADP</keyword>
<keyword id="KW-0560">Oxidoreductase</keyword>
<reference key="1">
    <citation type="journal article" date="2007" name="Genes Dev.">
        <title>New insights into Acinetobacter baumannii pathogenesis revealed by high-density pyrosequencing and transposon mutagenesis.</title>
        <authorList>
            <person name="Smith M.G."/>
            <person name="Gianoulis T.A."/>
            <person name="Pukatzki S."/>
            <person name="Mekalanos J.J."/>
            <person name="Ornston L.N."/>
            <person name="Gerstein M."/>
            <person name="Snyder M."/>
        </authorList>
    </citation>
    <scope>NUCLEOTIDE SEQUENCE [LARGE SCALE GENOMIC DNA]</scope>
    <source>
        <strain>ATCC 17978 / DSM 105126 / CIP 53.77 / LMG 1025 / NCDC KC755 / 5377</strain>
    </source>
</reference>
<name>ILVC_ACIBT</name>
<comment type="function">
    <text evidence="1">Involved in the biosynthesis of branched-chain amino acids (BCAA). Catalyzes an alkyl-migration followed by a ketol-acid reduction of (S)-2-acetolactate (S2AL) to yield (R)-2,3-dihydroxy-isovalerate. In the isomerase reaction, S2AL is rearranged via a Mg-dependent methyl migration to produce 3-hydroxy-3-methyl-2-ketobutyrate (HMKB). In the reductase reaction, this 2-ketoacid undergoes a metal-dependent reduction by NADPH to yield (R)-2,3-dihydroxy-isovalerate.</text>
</comment>
<comment type="catalytic activity">
    <reaction evidence="1">
        <text>(2R)-2,3-dihydroxy-3-methylbutanoate + NADP(+) = (2S)-2-acetolactate + NADPH + H(+)</text>
        <dbReference type="Rhea" id="RHEA:22068"/>
        <dbReference type="ChEBI" id="CHEBI:15378"/>
        <dbReference type="ChEBI" id="CHEBI:49072"/>
        <dbReference type="ChEBI" id="CHEBI:57783"/>
        <dbReference type="ChEBI" id="CHEBI:58349"/>
        <dbReference type="ChEBI" id="CHEBI:58476"/>
        <dbReference type="EC" id="1.1.1.86"/>
    </reaction>
</comment>
<comment type="catalytic activity">
    <reaction evidence="1">
        <text>(2R,3R)-2,3-dihydroxy-3-methylpentanoate + NADP(+) = (S)-2-ethyl-2-hydroxy-3-oxobutanoate + NADPH + H(+)</text>
        <dbReference type="Rhea" id="RHEA:13493"/>
        <dbReference type="ChEBI" id="CHEBI:15378"/>
        <dbReference type="ChEBI" id="CHEBI:49256"/>
        <dbReference type="ChEBI" id="CHEBI:49258"/>
        <dbReference type="ChEBI" id="CHEBI:57783"/>
        <dbReference type="ChEBI" id="CHEBI:58349"/>
        <dbReference type="EC" id="1.1.1.86"/>
    </reaction>
</comment>
<comment type="cofactor">
    <cofactor evidence="1">
        <name>Mg(2+)</name>
        <dbReference type="ChEBI" id="CHEBI:18420"/>
    </cofactor>
    <text evidence="1">Binds 2 magnesium ions per subunit.</text>
</comment>
<comment type="pathway">
    <text evidence="1">Amino-acid biosynthesis; L-isoleucine biosynthesis; L-isoleucine from 2-oxobutanoate: step 2/4.</text>
</comment>
<comment type="pathway">
    <text evidence="1">Amino-acid biosynthesis; L-valine biosynthesis; L-valine from pyruvate: step 2/4.</text>
</comment>
<comment type="similarity">
    <text evidence="1">Belongs to the ketol-acid reductoisomerase family.</text>
</comment>
<feature type="chain" id="PRO_1000124244" description="Ketol-acid reductoisomerase (NADP(+))">
    <location>
        <begin position="1"/>
        <end position="338"/>
    </location>
</feature>
<feature type="domain" description="KARI N-terminal Rossmann" evidence="2">
    <location>
        <begin position="1"/>
        <end position="181"/>
    </location>
</feature>
<feature type="domain" description="KARI C-terminal knotted" evidence="3">
    <location>
        <begin position="182"/>
        <end position="327"/>
    </location>
</feature>
<feature type="active site" evidence="1">
    <location>
        <position position="107"/>
    </location>
</feature>
<feature type="binding site" evidence="1">
    <location>
        <begin position="24"/>
        <end position="27"/>
    </location>
    <ligand>
        <name>NADP(+)</name>
        <dbReference type="ChEBI" id="CHEBI:58349"/>
    </ligand>
</feature>
<feature type="binding site" evidence="1">
    <location>
        <position position="47"/>
    </location>
    <ligand>
        <name>NADP(+)</name>
        <dbReference type="ChEBI" id="CHEBI:58349"/>
    </ligand>
</feature>
<feature type="binding site" evidence="1">
    <location>
        <position position="50"/>
    </location>
    <ligand>
        <name>NADP(+)</name>
        <dbReference type="ChEBI" id="CHEBI:58349"/>
    </ligand>
</feature>
<feature type="binding site" evidence="1">
    <location>
        <position position="52"/>
    </location>
    <ligand>
        <name>NADP(+)</name>
        <dbReference type="ChEBI" id="CHEBI:58349"/>
    </ligand>
</feature>
<feature type="binding site" evidence="1">
    <location>
        <begin position="82"/>
        <end position="85"/>
    </location>
    <ligand>
        <name>NADP(+)</name>
        <dbReference type="ChEBI" id="CHEBI:58349"/>
    </ligand>
</feature>
<feature type="binding site" evidence="1">
    <location>
        <position position="133"/>
    </location>
    <ligand>
        <name>NADP(+)</name>
        <dbReference type="ChEBI" id="CHEBI:58349"/>
    </ligand>
</feature>
<feature type="binding site" evidence="1">
    <location>
        <position position="190"/>
    </location>
    <ligand>
        <name>Mg(2+)</name>
        <dbReference type="ChEBI" id="CHEBI:18420"/>
        <label>1</label>
    </ligand>
</feature>
<feature type="binding site" evidence="1">
    <location>
        <position position="190"/>
    </location>
    <ligand>
        <name>Mg(2+)</name>
        <dbReference type="ChEBI" id="CHEBI:18420"/>
        <label>2</label>
    </ligand>
</feature>
<feature type="binding site" evidence="1">
    <location>
        <position position="194"/>
    </location>
    <ligand>
        <name>Mg(2+)</name>
        <dbReference type="ChEBI" id="CHEBI:18420"/>
        <label>1</label>
    </ligand>
</feature>
<feature type="binding site" evidence="1">
    <location>
        <position position="226"/>
    </location>
    <ligand>
        <name>Mg(2+)</name>
        <dbReference type="ChEBI" id="CHEBI:18420"/>
        <label>2</label>
    </ligand>
</feature>
<feature type="binding site" evidence="1">
    <location>
        <position position="230"/>
    </location>
    <ligand>
        <name>Mg(2+)</name>
        <dbReference type="ChEBI" id="CHEBI:18420"/>
        <label>2</label>
    </ligand>
</feature>
<feature type="binding site" evidence="1">
    <location>
        <position position="251"/>
    </location>
    <ligand>
        <name>substrate</name>
    </ligand>
</feature>
<evidence type="ECO:0000255" key="1">
    <source>
        <dbReference type="HAMAP-Rule" id="MF_00435"/>
    </source>
</evidence>
<evidence type="ECO:0000255" key="2">
    <source>
        <dbReference type="PROSITE-ProRule" id="PRU01197"/>
    </source>
</evidence>
<evidence type="ECO:0000255" key="3">
    <source>
        <dbReference type="PROSITE-ProRule" id="PRU01198"/>
    </source>
</evidence>
<sequence length="338" mass="36853">MQIFYDKDCDLSIIQSKKVAIIGYGSQGHAHALNLKDSGVDVTVGLRAGSASWKKAENAGLKVAEVPAAVKQADLVMILTPDEFQSQLYRDVIEPNIKEGATLAFAHGFSVLYNQVVPRKDLDVIMVAPKAPGHTVRSEFQRGSGVPDLIAIHQDASGNARNVALSYASGVGGGRTGIIETSFREETETDLFGEQAVLCGGAVELVKMGFETLVEAGYAPEMAYFECLHELKLIVDLMFEGGIADMNYSVSNNAEYGEYVTGPEVINEQSREAMRNALKRIQSGEYAKMFIQEGALNYPSMTARRRQNAAHGIEQTGAKLRAMMPWIQANKIVDKEKN</sequence>
<dbReference type="EC" id="1.1.1.86" evidence="1"/>
<dbReference type="EMBL" id="CP000521">
    <property type="protein sequence ID" value="ABO10998.2"/>
    <property type="molecule type" value="Genomic_DNA"/>
</dbReference>
<dbReference type="RefSeq" id="WP_001165443.1">
    <property type="nucleotide sequence ID" value="NZ_CP053098.1"/>
</dbReference>
<dbReference type="SMR" id="A3M254"/>
<dbReference type="GeneID" id="92892527"/>
<dbReference type="KEGG" id="acb:A1S_0545"/>
<dbReference type="HOGENOM" id="CLU_033821_0_1_6"/>
<dbReference type="UniPathway" id="UPA00047">
    <property type="reaction ID" value="UER00056"/>
</dbReference>
<dbReference type="UniPathway" id="UPA00049">
    <property type="reaction ID" value="UER00060"/>
</dbReference>
<dbReference type="GO" id="GO:0005829">
    <property type="term" value="C:cytosol"/>
    <property type="evidence" value="ECO:0007669"/>
    <property type="project" value="TreeGrafter"/>
</dbReference>
<dbReference type="GO" id="GO:0004455">
    <property type="term" value="F:ketol-acid reductoisomerase activity"/>
    <property type="evidence" value="ECO:0007669"/>
    <property type="project" value="UniProtKB-UniRule"/>
</dbReference>
<dbReference type="GO" id="GO:0000287">
    <property type="term" value="F:magnesium ion binding"/>
    <property type="evidence" value="ECO:0007669"/>
    <property type="project" value="UniProtKB-UniRule"/>
</dbReference>
<dbReference type="GO" id="GO:0050661">
    <property type="term" value="F:NADP binding"/>
    <property type="evidence" value="ECO:0007669"/>
    <property type="project" value="InterPro"/>
</dbReference>
<dbReference type="GO" id="GO:0009097">
    <property type="term" value="P:isoleucine biosynthetic process"/>
    <property type="evidence" value="ECO:0007669"/>
    <property type="project" value="UniProtKB-UniRule"/>
</dbReference>
<dbReference type="GO" id="GO:0009099">
    <property type="term" value="P:L-valine biosynthetic process"/>
    <property type="evidence" value="ECO:0007669"/>
    <property type="project" value="UniProtKB-UniRule"/>
</dbReference>
<dbReference type="FunFam" id="3.40.50.720:FF:000023">
    <property type="entry name" value="Ketol-acid reductoisomerase (NADP(+))"/>
    <property type="match status" value="1"/>
</dbReference>
<dbReference type="Gene3D" id="6.10.240.10">
    <property type="match status" value="1"/>
</dbReference>
<dbReference type="Gene3D" id="3.40.50.720">
    <property type="entry name" value="NAD(P)-binding Rossmann-like Domain"/>
    <property type="match status" value="1"/>
</dbReference>
<dbReference type="HAMAP" id="MF_00435">
    <property type="entry name" value="IlvC"/>
    <property type="match status" value="1"/>
</dbReference>
<dbReference type="InterPro" id="IPR008927">
    <property type="entry name" value="6-PGluconate_DH-like_C_sf"/>
</dbReference>
<dbReference type="InterPro" id="IPR013023">
    <property type="entry name" value="KARI"/>
</dbReference>
<dbReference type="InterPro" id="IPR000506">
    <property type="entry name" value="KARI_C"/>
</dbReference>
<dbReference type="InterPro" id="IPR013116">
    <property type="entry name" value="KARI_N"/>
</dbReference>
<dbReference type="InterPro" id="IPR014359">
    <property type="entry name" value="KARI_prok"/>
</dbReference>
<dbReference type="InterPro" id="IPR036291">
    <property type="entry name" value="NAD(P)-bd_dom_sf"/>
</dbReference>
<dbReference type="NCBIfam" id="TIGR00465">
    <property type="entry name" value="ilvC"/>
    <property type="match status" value="1"/>
</dbReference>
<dbReference type="NCBIfam" id="NF004017">
    <property type="entry name" value="PRK05479.1"/>
    <property type="match status" value="1"/>
</dbReference>
<dbReference type="NCBIfam" id="NF009940">
    <property type="entry name" value="PRK13403.1"/>
    <property type="match status" value="1"/>
</dbReference>
<dbReference type="PANTHER" id="PTHR21371">
    <property type="entry name" value="KETOL-ACID REDUCTOISOMERASE, MITOCHONDRIAL"/>
    <property type="match status" value="1"/>
</dbReference>
<dbReference type="PANTHER" id="PTHR21371:SF1">
    <property type="entry name" value="KETOL-ACID REDUCTOISOMERASE, MITOCHONDRIAL"/>
    <property type="match status" value="1"/>
</dbReference>
<dbReference type="Pfam" id="PF01450">
    <property type="entry name" value="KARI_C"/>
    <property type="match status" value="1"/>
</dbReference>
<dbReference type="Pfam" id="PF07991">
    <property type="entry name" value="KARI_N"/>
    <property type="match status" value="1"/>
</dbReference>
<dbReference type="PIRSF" id="PIRSF000116">
    <property type="entry name" value="IlvC_gammaproteo"/>
    <property type="match status" value="1"/>
</dbReference>
<dbReference type="SUPFAM" id="SSF48179">
    <property type="entry name" value="6-phosphogluconate dehydrogenase C-terminal domain-like"/>
    <property type="match status" value="1"/>
</dbReference>
<dbReference type="SUPFAM" id="SSF51735">
    <property type="entry name" value="NAD(P)-binding Rossmann-fold domains"/>
    <property type="match status" value="1"/>
</dbReference>
<dbReference type="PROSITE" id="PS51851">
    <property type="entry name" value="KARI_C"/>
    <property type="match status" value="1"/>
</dbReference>
<dbReference type="PROSITE" id="PS51850">
    <property type="entry name" value="KARI_N"/>
    <property type="match status" value="1"/>
</dbReference>
<gene>
    <name evidence="1" type="primary">ilvC</name>
    <name type="ordered locus">A1S_0545</name>
</gene>
<organism>
    <name type="scientific">Acinetobacter baumannii (strain ATCC 17978 / DSM 105126 / CIP 53.77 / LMG 1025 / NCDC KC755 / 5377)</name>
    <dbReference type="NCBI Taxonomy" id="400667"/>
    <lineage>
        <taxon>Bacteria</taxon>
        <taxon>Pseudomonadati</taxon>
        <taxon>Pseudomonadota</taxon>
        <taxon>Gammaproteobacteria</taxon>
        <taxon>Moraxellales</taxon>
        <taxon>Moraxellaceae</taxon>
        <taxon>Acinetobacter</taxon>
        <taxon>Acinetobacter calcoaceticus/baumannii complex</taxon>
    </lineage>
</organism>
<proteinExistence type="inferred from homology"/>
<accession>A3M254</accession>
<protein>
    <recommendedName>
        <fullName evidence="1">Ketol-acid reductoisomerase (NADP(+))</fullName>
        <shortName evidence="1">KARI</shortName>
        <ecNumber evidence="1">1.1.1.86</ecNumber>
    </recommendedName>
    <alternativeName>
        <fullName evidence="1">Acetohydroxy-acid isomeroreductase</fullName>
        <shortName evidence="1">AHIR</shortName>
    </alternativeName>
    <alternativeName>
        <fullName evidence="1">Alpha-keto-beta-hydroxylacyl reductoisomerase</fullName>
    </alternativeName>
    <alternativeName>
        <fullName evidence="1">Ketol-acid reductoisomerase type 1</fullName>
    </alternativeName>
    <alternativeName>
        <fullName evidence="1">Ketol-acid reductoisomerase type I</fullName>
    </alternativeName>
</protein>